<reference key="1">
    <citation type="journal article" date="2007" name="Science">
        <title>Legumes symbioses: absence of nod genes in photosynthetic bradyrhizobia.</title>
        <authorList>
            <person name="Giraud E."/>
            <person name="Moulin L."/>
            <person name="Vallenet D."/>
            <person name="Barbe V."/>
            <person name="Cytryn E."/>
            <person name="Avarre J.-C."/>
            <person name="Jaubert M."/>
            <person name="Simon D."/>
            <person name="Cartieaux F."/>
            <person name="Prin Y."/>
            <person name="Bena G."/>
            <person name="Hannibal L."/>
            <person name="Fardoux J."/>
            <person name="Kojadinovic M."/>
            <person name="Vuillet L."/>
            <person name="Lajus A."/>
            <person name="Cruveiller S."/>
            <person name="Rouy Z."/>
            <person name="Mangenot S."/>
            <person name="Segurens B."/>
            <person name="Dossat C."/>
            <person name="Franck W.L."/>
            <person name="Chang W.-S."/>
            <person name="Saunders E."/>
            <person name="Bruce D."/>
            <person name="Richardson P."/>
            <person name="Normand P."/>
            <person name="Dreyfus B."/>
            <person name="Pignol D."/>
            <person name="Stacey G."/>
            <person name="Emerich D."/>
            <person name="Vermeglio A."/>
            <person name="Medigue C."/>
            <person name="Sadowsky M."/>
        </authorList>
    </citation>
    <scope>NUCLEOTIDE SEQUENCE [LARGE SCALE GENOMIC DNA]</scope>
    <source>
        <strain>ORS 278</strain>
    </source>
</reference>
<dbReference type="EC" id="2.7.4.22" evidence="1"/>
<dbReference type="EMBL" id="CU234118">
    <property type="protein sequence ID" value="CAL77890.1"/>
    <property type="molecule type" value="Genomic_DNA"/>
</dbReference>
<dbReference type="RefSeq" id="WP_011927018.1">
    <property type="nucleotide sequence ID" value="NC_009445.1"/>
</dbReference>
<dbReference type="SMR" id="A4YVG4"/>
<dbReference type="STRING" id="114615.BRADO4138"/>
<dbReference type="KEGG" id="bra:BRADO4138"/>
<dbReference type="eggNOG" id="COG0528">
    <property type="taxonomic scope" value="Bacteria"/>
</dbReference>
<dbReference type="HOGENOM" id="CLU_033861_0_0_5"/>
<dbReference type="OrthoDB" id="9807458at2"/>
<dbReference type="UniPathway" id="UPA00159">
    <property type="reaction ID" value="UER00275"/>
</dbReference>
<dbReference type="Proteomes" id="UP000001994">
    <property type="component" value="Chromosome"/>
</dbReference>
<dbReference type="GO" id="GO:0005829">
    <property type="term" value="C:cytosol"/>
    <property type="evidence" value="ECO:0007669"/>
    <property type="project" value="TreeGrafter"/>
</dbReference>
<dbReference type="GO" id="GO:0005524">
    <property type="term" value="F:ATP binding"/>
    <property type="evidence" value="ECO:0007669"/>
    <property type="project" value="UniProtKB-KW"/>
</dbReference>
<dbReference type="GO" id="GO:0033862">
    <property type="term" value="F:UMP kinase activity"/>
    <property type="evidence" value="ECO:0007669"/>
    <property type="project" value="UniProtKB-EC"/>
</dbReference>
<dbReference type="GO" id="GO:0044210">
    <property type="term" value="P:'de novo' CTP biosynthetic process"/>
    <property type="evidence" value="ECO:0007669"/>
    <property type="project" value="UniProtKB-UniRule"/>
</dbReference>
<dbReference type="GO" id="GO:0006225">
    <property type="term" value="P:UDP biosynthetic process"/>
    <property type="evidence" value="ECO:0007669"/>
    <property type="project" value="TreeGrafter"/>
</dbReference>
<dbReference type="CDD" id="cd04254">
    <property type="entry name" value="AAK_UMPK-PyrH-Ec"/>
    <property type="match status" value="1"/>
</dbReference>
<dbReference type="FunFam" id="3.40.1160.10:FF:000001">
    <property type="entry name" value="Uridylate kinase"/>
    <property type="match status" value="1"/>
</dbReference>
<dbReference type="Gene3D" id="3.40.1160.10">
    <property type="entry name" value="Acetylglutamate kinase-like"/>
    <property type="match status" value="1"/>
</dbReference>
<dbReference type="HAMAP" id="MF_01220_B">
    <property type="entry name" value="PyrH_B"/>
    <property type="match status" value="1"/>
</dbReference>
<dbReference type="InterPro" id="IPR036393">
    <property type="entry name" value="AceGlu_kinase-like_sf"/>
</dbReference>
<dbReference type="InterPro" id="IPR001048">
    <property type="entry name" value="Asp/Glu/Uridylate_kinase"/>
</dbReference>
<dbReference type="InterPro" id="IPR011817">
    <property type="entry name" value="Uridylate_kinase"/>
</dbReference>
<dbReference type="InterPro" id="IPR015963">
    <property type="entry name" value="Uridylate_kinase_bac"/>
</dbReference>
<dbReference type="NCBIfam" id="TIGR02075">
    <property type="entry name" value="pyrH_bact"/>
    <property type="match status" value="1"/>
</dbReference>
<dbReference type="PANTHER" id="PTHR42833">
    <property type="entry name" value="URIDYLATE KINASE"/>
    <property type="match status" value="1"/>
</dbReference>
<dbReference type="PANTHER" id="PTHR42833:SF4">
    <property type="entry name" value="URIDYLATE KINASE PUMPKIN, CHLOROPLASTIC"/>
    <property type="match status" value="1"/>
</dbReference>
<dbReference type="Pfam" id="PF00696">
    <property type="entry name" value="AA_kinase"/>
    <property type="match status" value="1"/>
</dbReference>
<dbReference type="PIRSF" id="PIRSF005650">
    <property type="entry name" value="Uridylate_kin"/>
    <property type="match status" value="1"/>
</dbReference>
<dbReference type="SUPFAM" id="SSF53633">
    <property type="entry name" value="Carbamate kinase-like"/>
    <property type="match status" value="1"/>
</dbReference>
<feature type="chain" id="PRO_0000323803" description="Uridylate kinase">
    <location>
        <begin position="1"/>
        <end position="238"/>
    </location>
</feature>
<feature type="binding site" evidence="1">
    <location>
        <begin position="12"/>
        <end position="15"/>
    </location>
    <ligand>
        <name>ATP</name>
        <dbReference type="ChEBI" id="CHEBI:30616"/>
    </ligand>
</feature>
<feature type="binding site" evidence="1">
    <location>
        <position position="54"/>
    </location>
    <ligand>
        <name>UMP</name>
        <dbReference type="ChEBI" id="CHEBI:57865"/>
    </ligand>
</feature>
<feature type="binding site" evidence="1">
    <location>
        <position position="55"/>
    </location>
    <ligand>
        <name>ATP</name>
        <dbReference type="ChEBI" id="CHEBI:30616"/>
    </ligand>
</feature>
<feature type="binding site" evidence="1">
    <location>
        <position position="59"/>
    </location>
    <ligand>
        <name>ATP</name>
        <dbReference type="ChEBI" id="CHEBI:30616"/>
    </ligand>
</feature>
<feature type="binding site" evidence="1">
    <location>
        <position position="74"/>
    </location>
    <ligand>
        <name>UMP</name>
        <dbReference type="ChEBI" id="CHEBI:57865"/>
    </ligand>
</feature>
<feature type="binding site" evidence="1">
    <location>
        <begin position="135"/>
        <end position="142"/>
    </location>
    <ligand>
        <name>UMP</name>
        <dbReference type="ChEBI" id="CHEBI:57865"/>
    </ligand>
</feature>
<feature type="binding site" evidence="1">
    <location>
        <position position="162"/>
    </location>
    <ligand>
        <name>ATP</name>
        <dbReference type="ChEBI" id="CHEBI:30616"/>
    </ligand>
</feature>
<feature type="binding site" evidence="1">
    <location>
        <position position="163"/>
    </location>
    <ligand>
        <name>ATP</name>
        <dbReference type="ChEBI" id="CHEBI:30616"/>
    </ligand>
</feature>
<feature type="binding site" evidence="1">
    <location>
        <position position="168"/>
    </location>
    <ligand>
        <name>ATP</name>
        <dbReference type="ChEBI" id="CHEBI:30616"/>
    </ligand>
</feature>
<feature type="binding site" evidence="1">
    <location>
        <position position="171"/>
    </location>
    <ligand>
        <name>ATP</name>
        <dbReference type="ChEBI" id="CHEBI:30616"/>
    </ligand>
</feature>
<organism>
    <name type="scientific">Bradyrhizobium sp. (strain ORS 278)</name>
    <dbReference type="NCBI Taxonomy" id="114615"/>
    <lineage>
        <taxon>Bacteria</taxon>
        <taxon>Pseudomonadati</taxon>
        <taxon>Pseudomonadota</taxon>
        <taxon>Alphaproteobacteria</taxon>
        <taxon>Hyphomicrobiales</taxon>
        <taxon>Nitrobacteraceae</taxon>
        <taxon>Bradyrhizobium</taxon>
    </lineage>
</organism>
<proteinExistence type="inferred from homology"/>
<name>PYRH_BRASO</name>
<sequence length="238" mass="24666">MAEPVYRRVVVKLSGEYLAGPHSFGIDQPTVDRIADDLIAVQKLGIEIAVVVGGGNMVRGVEVSSQGVSRATGDTMGMLATVMNSLALEAALQRKGAPAVALSAFVMPQVCELFTRAAAHRALAEGRIVVLGGGTGNPYFTTDTTAVLRAAEIGAQAVLKATNVDGVYSADPKKDPAAKRFDRLTHSQAIEGGYKVMDATAFALARETSLPIIVFSIAEPGAIGAMLRGEGRGTIVAG</sequence>
<comment type="function">
    <text evidence="1">Catalyzes the reversible phosphorylation of UMP to UDP.</text>
</comment>
<comment type="catalytic activity">
    <reaction evidence="1">
        <text>UMP + ATP = UDP + ADP</text>
        <dbReference type="Rhea" id="RHEA:24400"/>
        <dbReference type="ChEBI" id="CHEBI:30616"/>
        <dbReference type="ChEBI" id="CHEBI:57865"/>
        <dbReference type="ChEBI" id="CHEBI:58223"/>
        <dbReference type="ChEBI" id="CHEBI:456216"/>
        <dbReference type="EC" id="2.7.4.22"/>
    </reaction>
</comment>
<comment type="activity regulation">
    <text evidence="1">Inhibited by UTP.</text>
</comment>
<comment type="pathway">
    <text evidence="1">Pyrimidine metabolism; CTP biosynthesis via de novo pathway; UDP from UMP (UMPK route): step 1/1.</text>
</comment>
<comment type="subunit">
    <text evidence="1">Homohexamer.</text>
</comment>
<comment type="subcellular location">
    <subcellularLocation>
        <location evidence="1">Cytoplasm</location>
    </subcellularLocation>
</comment>
<comment type="similarity">
    <text evidence="1">Belongs to the UMP kinase family.</text>
</comment>
<keyword id="KW-0067">ATP-binding</keyword>
<keyword id="KW-0963">Cytoplasm</keyword>
<keyword id="KW-0418">Kinase</keyword>
<keyword id="KW-0547">Nucleotide-binding</keyword>
<keyword id="KW-0665">Pyrimidine biosynthesis</keyword>
<keyword id="KW-1185">Reference proteome</keyword>
<keyword id="KW-0808">Transferase</keyword>
<evidence type="ECO:0000255" key="1">
    <source>
        <dbReference type="HAMAP-Rule" id="MF_01220"/>
    </source>
</evidence>
<protein>
    <recommendedName>
        <fullName evidence="1">Uridylate kinase</fullName>
        <shortName evidence="1">UK</shortName>
        <ecNumber evidence="1">2.7.4.22</ecNumber>
    </recommendedName>
    <alternativeName>
        <fullName evidence="1">Uridine monophosphate kinase</fullName>
        <shortName evidence="1">UMP kinase</shortName>
        <shortName evidence="1">UMPK</shortName>
    </alternativeName>
</protein>
<gene>
    <name evidence="1" type="primary">pyrH</name>
    <name type="ordered locus">BRADO4138</name>
</gene>
<accession>A4YVG4</accession>